<comment type="function">
    <text evidence="1">One of the primary rRNA binding proteins, it binds directly to 16S rRNA where it nucleates assembly of the body of the 30S subunit.</text>
</comment>
<comment type="function">
    <text evidence="1">With S5 and S12 plays an important role in translational accuracy.</text>
</comment>
<comment type="subunit">
    <text evidence="1">Part of the 30S ribosomal subunit. Contacts protein S5. The interaction surface between S4 and S5 is involved in control of translational fidelity.</text>
</comment>
<comment type="similarity">
    <text evidence="1">Belongs to the universal ribosomal protein uS4 family.</text>
</comment>
<protein>
    <recommendedName>
        <fullName evidence="1">Small ribosomal subunit protein uS4</fullName>
    </recommendedName>
    <alternativeName>
        <fullName evidence="2">30S ribosomal protein S4</fullName>
    </alternativeName>
</protein>
<name>RS4_NATPD</name>
<evidence type="ECO:0000255" key="1">
    <source>
        <dbReference type="HAMAP-Rule" id="MF_01306"/>
    </source>
</evidence>
<evidence type="ECO:0000305" key="2"/>
<feature type="chain" id="PRO_0000228943" description="Small ribosomal subunit protein uS4">
    <location>
        <begin position="1"/>
        <end position="174"/>
    </location>
</feature>
<feature type="domain" description="S4 RNA-binding" evidence="1">
    <location>
        <begin position="105"/>
        <end position="169"/>
    </location>
</feature>
<dbReference type="EMBL" id="CR936257">
    <property type="protein sequence ID" value="CAI49506.1"/>
    <property type="molecule type" value="Genomic_DNA"/>
</dbReference>
<dbReference type="RefSeq" id="WP_011323131.1">
    <property type="nucleotide sequence ID" value="NC_007426.1"/>
</dbReference>
<dbReference type="SMR" id="Q3IQT8"/>
<dbReference type="STRING" id="348780.NP_2830A"/>
<dbReference type="EnsemblBacteria" id="CAI49506">
    <property type="protein sequence ID" value="CAI49506"/>
    <property type="gene ID" value="NP_2830A"/>
</dbReference>
<dbReference type="GeneID" id="3703182"/>
<dbReference type="KEGG" id="nph:NP_2830A"/>
<dbReference type="eggNOG" id="arCOG04239">
    <property type="taxonomic scope" value="Archaea"/>
</dbReference>
<dbReference type="HOGENOM" id="CLU_089738_1_1_2"/>
<dbReference type="OrthoDB" id="10429at2157"/>
<dbReference type="Proteomes" id="UP000002698">
    <property type="component" value="Chromosome"/>
</dbReference>
<dbReference type="GO" id="GO:0015935">
    <property type="term" value="C:small ribosomal subunit"/>
    <property type="evidence" value="ECO:0007669"/>
    <property type="project" value="InterPro"/>
</dbReference>
<dbReference type="GO" id="GO:0019843">
    <property type="term" value="F:rRNA binding"/>
    <property type="evidence" value="ECO:0007669"/>
    <property type="project" value="UniProtKB-UniRule"/>
</dbReference>
<dbReference type="GO" id="GO:0003735">
    <property type="term" value="F:structural constituent of ribosome"/>
    <property type="evidence" value="ECO:0007669"/>
    <property type="project" value="InterPro"/>
</dbReference>
<dbReference type="GO" id="GO:0042274">
    <property type="term" value="P:ribosomal small subunit biogenesis"/>
    <property type="evidence" value="ECO:0007669"/>
    <property type="project" value="TreeGrafter"/>
</dbReference>
<dbReference type="GO" id="GO:0006412">
    <property type="term" value="P:translation"/>
    <property type="evidence" value="ECO:0007669"/>
    <property type="project" value="UniProtKB-UniRule"/>
</dbReference>
<dbReference type="CDD" id="cd00165">
    <property type="entry name" value="S4"/>
    <property type="match status" value="1"/>
</dbReference>
<dbReference type="Gene3D" id="3.10.290.10">
    <property type="entry name" value="RNA-binding S4 domain"/>
    <property type="match status" value="1"/>
</dbReference>
<dbReference type="HAMAP" id="MF_01306_A">
    <property type="entry name" value="Ribosomal_uS4_A"/>
    <property type="match status" value="1"/>
</dbReference>
<dbReference type="InterPro" id="IPR022801">
    <property type="entry name" value="Ribosomal_uS4"/>
</dbReference>
<dbReference type="InterPro" id="IPR022802">
    <property type="entry name" value="Ribosomal_uS4_arc"/>
</dbReference>
<dbReference type="InterPro" id="IPR005710">
    <property type="entry name" value="Ribosomal_uS4_euk/arc"/>
</dbReference>
<dbReference type="InterPro" id="IPR001912">
    <property type="entry name" value="Ribosomal_uS4_N"/>
</dbReference>
<dbReference type="InterPro" id="IPR002942">
    <property type="entry name" value="S4_RNA-bd"/>
</dbReference>
<dbReference type="InterPro" id="IPR036986">
    <property type="entry name" value="S4_RNA-bd_sf"/>
</dbReference>
<dbReference type="NCBIfam" id="NF003139">
    <property type="entry name" value="PRK04051.1"/>
    <property type="match status" value="1"/>
</dbReference>
<dbReference type="NCBIfam" id="TIGR01018">
    <property type="entry name" value="uS4_arch"/>
    <property type="match status" value="1"/>
</dbReference>
<dbReference type="PANTHER" id="PTHR11831">
    <property type="entry name" value="30S 40S RIBOSOMAL PROTEIN"/>
    <property type="match status" value="1"/>
</dbReference>
<dbReference type="PANTHER" id="PTHR11831:SF5">
    <property type="entry name" value="40S RIBOSOMAL PROTEIN S9"/>
    <property type="match status" value="1"/>
</dbReference>
<dbReference type="Pfam" id="PF01479">
    <property type="entry name" value="S4"/>
    <property type="match status" value="1"/>
</dbReference>
<dbReference type="SMART" id="SM01390">
    <property type="entry name" value="Ribosomal_S4"/>
    <property type="match status" value="1"/>
</dbReference>
<dbReference type="SMART" id="SM00363">
    <property type="entry name" value="S4"/>
    <property type="match status" value="1"/>
</dbReference>
<dbReference type="SUPFAM" id="SSF55174">
    <property type="entry name" value="Alpha-L RNA-binding motif"/>
    <property type="match status" value="1"/>
</dbReference>
<dbReference type="PROSITE" id="PS50889">
    <property type="entry name" value="S4"/>
    <property type="match status" value="1"/>
</dbReference>
<gene>
    <name evidence="1" type="primary">rps4</name>
    <name type="ordered locus">NP_2830A</name>
</gene>
<proteinExistence type="inferred from homology"/>
<accession>Q3IQT8</accession>
<sequence length="174" mass="19438">MALGSNTKFYETPNHPFQGERIAEEGDLLSRYGLVNKEELWRAQSELRDYRREARRLIGEAQGDTVAAAEAGSEFLARLKRIGVLDDEDSLDDILSLDVTDILERRLQTVAYRKGLGNTPQQARQFIAHGHVTVNGARVSAPSYKVDVAEEGEIEFDETSPLADDLHPERAEGQ</sequence>
<keyword id="KW-1185">Reference proteome</keyword>
<keyword id="KW-0687">Ribonucleoprotein</keyword>
<keyword id="KW-0689">Ribosomal protein</keyword>
<keyword id="KW-0694">RNA-binding</keyword>
<keyword id="KW-0699">rRNA-binding</keyword>
<organism>
    <name type="scientific">Natronomonas pharaonis (strain ATCC 35678 / DSM 2160 / CIP 103997 / JCM 8858 / NBRC 14720 / NCIMB 2260 / Gabara)</name>
    <name type="common">Halobacterium pharaonis</name>
    <dbReference type="NCBI Taxonomy" id="348780"/>
    <lineage>
        <taxon>Archaea</taxon>
        <taxon>Methanobacteriati</taxon>
        <taxon>Methanobacteriota</taxon>
        <taxon>Stenosarchaea group</taxon>
        <taxon>Halobacteria</taxon>
        <taxon>Halobacteriales</taxon>
        <taxon>Haloarculaceae</taxon>
        <taxon>Natronomonas</taxon>
    </lineage>
</organism>
<reference key="1">
    <citation type="journal article" date="2005" name="Genome Res.">
        <title>Living with two extremes: conclusions from the genome sequence of Natronomonas pharaonis.</title>
        <authorList>
            <person name="Falb M."/>
            <person name="Pfeiffer F."/>
            <person name="Palm P."/>
            <person name="Rodewald K."/>
            <person name="Hickmann V."/>
            <person name="Tittor J."/>
            <person name="Oesterhelt D."/>
        </authorList>
    </citation>
    <scope>NUCLEOTIDE SEQUENCE [LARGE SCALE GENOMIC DNA]</scope>
    <source>
        <strain>ATCC 35678 / DSM 2160 / CIP 103997 / JCM 8858 / NBRC 14720 / NCIMB 2260 / Gabara</strain>
    </source>
</reference>